<proteinExistence type="evidence at transcript level"/>
<name>HPPD_XENTR</name>
<accession>Q5BKL0</accession>
<dbReference type="EC" id="1.13.11.27" evidence="1"/>
<dbReference type="EMBL" id="BC091035">
    <property type="protein sequence ID" value="AAH91035.1"/>
    <property type="molecule type" value="mRNA"/>
</dbReference>
<dbReference type="RefSeq" id="NP_001025588.1">
    <property type="nucleotide sequence ID" value="NM_001030417.1"/>
</dbReference>
<dbReference type="SMR" id="Q5BKL0"/>
<dbReference type="STRING" id="8364.ENSXETP00000005645"/>
<dbReference type="PaxDb" id="8364-ENSXETP00000062603"/>
<dbReference type="DNASU" id="594976"/>
<dbReference type="GeneID" id="594976"/>
<dbReference type="KEGG" id="xtr:594976"/>
<dbReference type="AGR" id="Xenbase:XB-GENE-986330"/>
<dbReference type="CTD" id="594976"/>
<dbReference type="Xenbase" id="XB-GENE-986330">
    <property type="gene designation" value="hpd-like.2"/>
</dbReference>
<dbReference type="eggNOG" id="KOG0638">
    <property type="taxonomic scope" value="Eukaryota"/>
</dbReference>
<dbReference type="HOGENOM" id="CLU_034004_3_1_1"/>
<dbReference type="InParanoid" id="Q5BKL0"/>
<dbReference type="OMA" id="DMCSEYS"/>
<dbReference type="OrthoDB" id="414569at2759"/>
<dbReference type="PhylomeDB" id="Q5BKL0"/>
<dbReference type="UniPathway" id="UPA00139">
    <property type="reaction ID" value="UER00362"/>
</dbReference>
<dbReference type="Proteomes" id="UP000008143">
    <property type="component" value="Chromosome 2"/>
</dbReference>
<dbReference type="Bgee" id="ENSXETG00000007789">
    <property type="expression patterns" value="Expressed in liver and 7 other cell types or tissues"/>
</dbReference>
<dbReference type="ExpressionAtlas" id="Q5BKL0">
    <property type="expression patterns" value="baseline"/>
</dbReference>
<dbReference type="GO" id="GO:0005789">
    <property type="term" value="C:endoplasmic reticulum membrane"/>
    <property type="evidence" value="ECO:0007669"/>
    <property type="project" value="UniProtKB-SubCell"/>
</dbReference>
<dbReference type="GO" id="GO:0000139">
    <property type="term" value="C:Golgi membrane"/>
    <property type="evidence" value="ECO:0007669"/>
    <property type="project" value="UniProtKB-SubCell"/>
</dbReference>
<dbReference type="GO" id="GO:0003868">
    <property type="term" value="F:4-hydroxyphenylpyruvate dioxygenase activity"/>
    <property type="evidence" value="ECO:0000250"/>
    <property type="project" value="UniProtKB"/>
</dbReference>
<dbReference type="GO" id="GO:0046872">
    <property type="term" value="F:metal ion binding"/>
    <property type="evidence" value="ECO:0007669"/>
    <property type="project" value="UniProtKB-KW"/>
</dbReference>
<dbReference type="GO" id="GO:0042803">
    <property type="term" value="F:protein homodimerization activity"/>
    <property type="evidence" value="ECO:0000250"/>
    <property type="project" value="UniProtKB"/>
</dbReference>
<dbReference type="GO" id="GO:0006559">
    <property type="term" value="P:L-phenylalanine catabolic process"/>
    <property type="evidence" value="ECO:0007669"/>
    <property type="project" value="UniProtKB-UniPathway"/>
</dbReference>
<dbReference type="GO" id="GO:0006572">
    <property type="term" value="P:tyrosine catabolic process"/>
    <property type="evidence" value="ECO:0000250"/>
    <property type="project" value="UniProtKB"/>
</dbReference>
<dbReference type="CDD" id="cd07250">
    <property type="entry name" value="HPPD_C_like"/>
    <property type="match status" value="1"/>
</dbReference>
<dbReference type="CDD" id="cd08342">
    <property type="entry name" value="HPPD_N_like"/>
    <property type="match status" value="1"/>
</dbReference>
<dbReference type="FunFam" id="3.10.180.10:FF:000008">
    <property type="entry name" value="4-hydroxyphenylpyruvate dioxygenase"/>
    <property type="match status" value="1"/>
</dbReference>
<dbReference type="FunFam" id="3.10.180.10:FF:000022">
    <property type="entry name" value="4-hydroxyphenylpyruvate dioxygenase"/>
    <property type="match status" value="1"/>
</dbReference>
<dbReference type="Gene3D" id="3.10.180.10">
    <property type="entry name" value="2,3-Dihydroxybiphenyl 1,2-Dioxygenase, domain 1"/>
    <property type="match status" value="2"/>
</dbReference>
<dbReference type="InterPro" id="IPR005956">
    <property type="entry name" value="4OHPhenylPyrv_dOase"/>
</dbReference>
<dbReference type="InterPro" id="IPR041735">
    <property type="entry name" value="4OHPhenylPyrv_dOase_C"/>
</dbReference>
<dbReference type="InterPro" id="IPR041736">
    <property type="entry name" value="4OHPhenylPyrv_dOase_N"/>
</dbReference>
<dbReference type="InterPro" id="IPR029068">
    <property type="entry name" value="Glyas_Bleomycin-R_OHBP_Dase"/>
</dbReference>
<dbReference type="InterPro" id="IPR004360">
    <property type="entry name" value="Glyas_Fos-R_dOase_dom"/>
</dbReference>
<dbReference type="InterPro" id="IPR037523">
    <property type="entry name" value="VOC"/>
</dbReference>
<dbReference type="NCBIfam" id="TIGR01263">
    <property type="entry name" value="4HPPD"/>
    <property type="match status" value="1"/>
</dbReference>
<dbReference type="PANTHER" id="PTHR11959">
    <property type="entry name" value="4-HYDROXYPHENYLPYRUVATE DIOXYGENASE"/>
    <property type="match status" value="1"/>
</dbReference>
<dbReference type="PANTHER" id="PTHR11959:SF11">
    <property type="entry name" value="4-HYDROXYPHENYLPYRUVATE DIOXYGENASE"/>
    <property type="match status" value="1"/>
</dbReference>
<dbReference type="Pfam" id="PF00903">
    <property type="entry name" value="Glyoxalase"/>
    <property type="match status" value="2"/>
</dbReference>
<dbReference type="PIRSF" id="PIRSF009283">
    <property type="entry name" value="HPP_dOase"/>
    <property type="match status" value="1"/>
</dbReference>
<dbReference type="SUPFAM" id="SSF54593">
    <property type="entry name" value="Glyoxalase/Bleomycin resistance protein/Dihydroxybiphenyl dioxygenase"/>
    <property type="match status" value="1"/>
</dbReference>
<dbReference type="PROSITE" id="PS51819">
    <property type="entry name" value="VOC"/>
    <property type="match status" value="2"/>
</dbReference>
<organism>
    <name type="scientific">Xenopus tropicalis</name>
    <name type="common">Western clawed frog</name>
    <name type="synonym">Silurana tropicalis</name>
    <dbReference type="NCBI Taxonomy" id="8364"/>
    <lineage>
        <taxon>Eukaryota</taxon>
        <taxon>Metazoa</taxon>
        <taxon>Chordata</taxon>
        <taxon>Craniata</taxon>
        <taxon>Vertebrata</taxon>
        <taxon>Euteleostomi</taxon>
        <taxon>Amphibia</taxon>
        <taxon>Batrachia</taxon>
        <taxon>Anura</taxon>
        <taxon>Pipoidea</taxon>
        <taxon>Pipidae</taxon>
        <taxon>Xenopodinae</taxon>
        <taxon>Xenopus</taxon>
        <taxon>Silurana</taxon>
    </lineage>
</organism>
<keyword id="KW-0963">Cytoplasm</keyword>
<keyword id="KW-0223">Dioxygenase</keyword>
<keyword id="KW-0256">Endoplasmic reticulum</keyword>
<keyword id="KW-0333">Golgi apparatus</keyword>
<keyword id="KW-0408">Iron</keyword>
<keyword id="KW-0472">Membrane</keyword>
<keyword id="KW-0479">Metal-binding</keyword>
<keyword id="KW-0560">Oxidoreductase</keyword>
<keyword id="KW-0585">Phenylalanine catabolism</keyword>
<keyword id="KW-1185">Reference proteome</keyword>
<keyword id="KW-0677">Repeat</keyword>
<keyword id="KW-0828">Tyrosine catabolism</keyword>
<comment type="function">
    <text evidence="1">Catalyzes the conversion of 4-hydroxyphenylpyruvic acid to homogentisic acid, one of the steps in tyrosine catabolism.</text>
</comment>
<comment type="catalytic activity">
    <reaction evidence="1">
        <text>3-(4-hydroxyphenyl)pyruvate + O2 = homogentisate + CO2</text>
        <dbReference type="Rhea" id="RHEA:16189"/>
        <dbReference type="ChEBI" id="CHEBI:15379"/>
        <dbReference type="ChEBI" id="CHEBI:16169"/>
        <dbReference type="ChEBI" id="CHEBI:16526"/>
        <dbReference type="ChEBI" id="CHEBI:36242"/>
        <dbReference type="EC" id="1.13.11.27"/>
    </reaction>
    <physiologicalReaction direction="left-to-right" evidence="1">
        <dbReference type="Rhea" id="RHEA:16190"/>
    </physiologicalReaction>
</comment>
<comment type="cofactor">
    <cofactor evidence="1">
        <name>Fe cation</name>
        <dbReference type="ChEBI" id="CHEBI:24875"/>
    </cofactor>
    <text evidence="1">Binds 1 Fe cation per subunit.</text>
</comment>
<comment type="pathway">
    <text>Amino-acid degradation; L-phenylalanine degradation; acetoacetate and fumarate from L-phenylalanine: step 3/6.</text>
</comment>
<comment type="subunit">
    <text evidence="1">Homodimer.</text>
</comment>
<comment type="subcellular location">
    <subcellularLocation>
        <location evidence="1">Cytoplasm</location>
    </subcellularLocation>
    <subcellularLocation>
        <location evidence="1">Endoplasmic reticulum membrane</location>
        <topology evidence="1">Peripheral membrane protein</topology>
    </subcellularLocation>
    <subcellularLocation>
        <location evidence="1">Golgi apparatus membrane</location>
        <topology evidence="1">Peripheral membrane protein</topology>
    </subcellularLocation>
</comment>
<comment type="similarity">
    <text evidence="3">Belongs to the 4HPPD family.</text>
</comment>
<gene>
    <name type="primary">hpd</name>
</gene>
<protein>
    <recommendedName>
        <fullName>4-hydroxyphenylpyruvate dioxygenase</fullName>
        <ecNumber evidence="1">1.13.11.27</ecNumber>
    </recommendedName>
    <alternativeName>
        <fullName>4-hydroxyphenylpyruvic acid oxidase</fullName>
        <shortName>4HPPD</shortName>
        <shortName>HPD</shortName>
        <shortName>HPPDase</shortName>
    </alternativeName>
</protein>
<evidence type="ECO:0000250" key="1">
    <source>
        <dbReference type="UniProtKB" id="P32755"/>
    </source>
</evidence>
<evidence type="ECO:0000255" key="2">
    <source>
        <dbReference type="PROSITE-ProRule" id="PRU01163"/>
    </source>
</evidence>
<evidence type="ECO:0000305" key="3"/>
<reference key="1">
    <citation type="submission" date="2005-03" db="EMBL/GenBank/DDBJ databases">
        <authorList>
            <consortium name="NIH - Xenopus Gene Collection (XGC) project"/>
        </authorList>
    </citation>
    <scope>NUCLEOTIDE SEQUENCE [LARGE SCALE MRNA]</scope>
</reference>
<feature type="chain" id="PRO_0000088393" description="4-hydroxyphenylpyruvate dioxygenase">
    <location>
        <begin position="1"/>
        <end position="394"/>
    </location>
</feature>
<feature type="domain" description="VOC 1" evidence="2">
    <location>
        <begin position="18"/>
        <end position="149"/>
    </location>
</feature>
<feature type="domain" description="VOC 2" evidence="2">
    <location>
        <begin position="181"/>
        <end position="339"/>
    </location>
</feature>
<feature type="binding site" evidence="1">
    <location>
        <position position="184"/>
    </location>
    <ligand>
        <name>Fe cation</name>
        <dbReference type="ChEBI" id="CHEBI:24875"/>
    </ligand>
</feature>
<feature type="binding site" evidence="1">
    <location>
        <position position="267"/>
    </location>
    <ligand>
        <name>Fe cation</name>
        <dbReference type="ChEBI" id="CHEBI:24875"/>
    </ligand>
</feature>
<feature type="binding site" evidence="1">
    <location>
        <position position="350"/>
    </location>
    <ligand>
        <name>Fe cation</name>
        <dbReference type="ChEBI" id="CHEBI:24875"/>
    </ligand>
</feature>
<sequence>MTSYTDKGEKHARGRFLSFHHLTFWVGNAKQAASFYCDKFGFEPCAYKGLETGSRDVVSHAIKQDKIIFVFQSPLNPGNQEMGQHMIKHGDGVKDVAFQVEDCDFLFQKAKDHGAVVVREPWIEEDEGGKVKYAVLQTYGDTTHTLLEYLGPYRGVFLPGYKEPLFRDPLLPTLPSGCLSFIDHIVGNQPDNEMVPIVEWYQKCLLFHRFWSVDDKQIHTEYSSLRSIVVTNYEETIKMPINEPAAGKKKSQIQEYVDYYGSAGVQHIALNTSNIIKAVKNLKSRGIEFLSAPDTYYEELRKKLKTAKITVKEDLNVLQELKILVDYDDKGYLLQIFTKPMQDRPTLFLEVIQRYNHFGFGAGNFKSLFEAIETDQDARGNLTIYAANGEHQVL</sequence>